<reference key="1">
    <citation type="journal article" date="2010" name="PLoS ONE">
        <title>The complete genome of Propionibacterium freudenreichii CIRM-BIA1, a hardy actinobacterium with food and probiotic applications.</title>
        <authorList>
            <person name="Falentin H."/>
            <person name="Deutsch S.M."/>
            <person name="Jan G."/>
            <person name="Loux V."/>
            <person name="Thierry A."/>
            <person name="Parayre S."/>
            <person name="Maillard M.B."/>
            <person name="Dherbecourt J."/>
            <person name="Cousin F.J."/>
            <person name="Jardin J."/>
            <person name="Siguier P."/>
            <person name="Couloux A."/>
            <person name="Barbe V."/>
            <person name="Vacherie B."/>
            <person name="Wincker P."/>
            <person name="Gibrat J.F."/>
            <person name="Gaillardin C."/>
            <person name="Lortal S."/>
        </authorList>
    </citation>
    <scope>NUCLEOTIDE SEQUENCE [LARGE SCALE GENOMIC DNA]</scope>
    <source>
        <strain>ATCC 9614 / DSM 4902 / CIP 103027 / NCIMB 8099 / CIRM-BIA1</strain>
    </source>
</reference>
<comment type="function">
    <text evidence="1">Part of the energy-coupling factor (ECF) transporter complex CbiMNOQ involved in cobalt import.</text>
</comment>
<comment type="pathway">
    <text evidence="1">Cofactor biosynthesis; adenosylcobalamin biosynthesis.</text>
</comment>
<comment type="subunit">
    <text evidence="1">Forms an energy-coupling factor (ECF) transporter complex composed of an ATP-binding protein (A component, CbiO), a transmembrane protein (T component, CbiQ) and 2 possible substrate-capture proteins (S components, CbiM and CbiN) of unknown stoichimetry.</text>
</comment>
<comment type="subcellular location">
    <subcellularLocation>
        <location evidence="1">Cell membrane</location>
        <topology evidence="1">Multi-pass membrane protein</topology>
    </subcellularLocation>
</comment>
<comment type="similarity">
    <text evidence="1">Belongs to the CbiM family.</text>
</comment>
<feature type="chain" id="PRO_0000411146" description="Cobalt transport protein CbiM">
    <location>
        <begin position="1"/>
        <end position="235"/>
    </location>
</feature>
<feature type="transmembrane region" description="Helical" evidence="1">
    <location>
        <begin position="6"/>
        <end position="26"/>
    </location>
</feature>
<feature type="transmembrane region" description="Helical" evidence="1">
    <location>
        <begin position="43"/>
        <end position="63"/>
    </location>
</feature>
<feature type="transmembrane region" description="Helical" evidence="1">
    <location>
        <begin position="85"/>
        <end position="105"/>
    </location>
</feature>
<feature type="transmembrane region" description="Helical" evidence="1">
    <location>
        <begin position="108"/>
        <end position="128"/>
    </location>
</feature>
<feature type="transmembrane region" description="Helical" evidence="1">
    <location>
        <begin position="133"/>
        <end position="153"/>
    </location>
</feature>
<feature type="transmembrane region" description="Helical" evidence="1">
    <location>
        <begin position="181"/>
        <end position="201"/>
    </location>
</feature>
<organism>
    <name type="scientific">Propionibacterium freudenreichii subsp. shermanii (strain ATCC 9614 / DSM 4902 / CIP 103027 / NCIMB 8099 / CIRM-BIA1)</name>
    <dbReference type="NCBI Taxonomy" id="754252"/>
    <lineage>
        <taxon>Bacteria</taxon>
        <taxon>Bacillati</taxon>
        <taxon>Actinomycetota</taxon>
        <taxon>Actinomycetes</taxon>
        <taxon>Propionibacteriales</taxon>
        <taxon>Propionibacteriaceae</taxon>
        <taxon>Propionibacterium</taxon>
    </lineage>
</organism>
<accession>D7GIS1</accession>
<evidence type="ECO:0000255" key="1">
    <source>
        <dbReference type="HAMAP-Rule" id="MF_01462"/>
    </source>
</evidence>
<proteinExistence type="inferred from homology"/>
<dbReference type="EMBL" id="FN806773">
    <property type="protein sequence ID" value="CBL55993.1"/>
    <property type="molecule type" value="Genomic_DNA"/>
</dbReference>
<dbReference type="RefSeq" id="WP_013160385.1">
    <property type="nucleotide sequence ID" value="NC_014215.1"/>
</dbReference>
<dbReference type="SMR" id="D7GIS1"/>
<dbReference type="STRING" id="754252.PFREUD_04590"/>
<dbReference type="KEGG" id="pfr:PFREUD_04590"/>
<dbReference type="eggNOG" id="COG0310">
    <property type="taxonomic scope" value="Bacteria"/>
</dbReference>
<dbReference type="HOGENOM" id="CLU_052508_3_0_11"/>
<dbReference type="UniPathway" id="UPA00148"/>
<dbReference type="Proteomes" id="UP000000936">
    <property type="component" value="Chromosome"/>
</dbReference>
<dbReference type="GO" id="GO:0043190">
    <property type="term" value="C:ATP-binding cassette (ABC) transporter complex"/>
    <property type="evidence" value="ECO:0007669"/>
    <property type="project" value="InterPro"/>
</dbReference>
<dbReference type="GO" id="GO:0015087">
    <property type="term" value="F:cobalt ion transmembrane transporter activity"/>
    <property type="evidence" value="ECO:0007669"/>
    <property type="project" value="UniProtKB-UniRule"/>
</dbReference>
<dbReference type="GO" id="GO:0009236">
    <property type="term" value="P:cobalamin biosynthetic process"/>
    <property type="evidence" value="ECO:0007669"/>
    <property type="project" value="UniProtKB-UniRule"/>
</dbReference>
<dbReference type="FunFam" id="1.10.1760.20:FF:000001">
    <property type="entry name" value="Cobalt transport protein CbiM"/>
    <property type="match status" value="1"/>
</dbReference>
<dbReference type="Gene3D" id="1.10.1760.20">
    <property type="match status" value="1"/>
</dbReference>
<dbReference type="HAMAP" id="MF_01462">
    <property type="entry name" value="CbiM"/>
    <property type="match status" value="1"/>
</dbReference>
<dbReference type="InterPro" id="IPR018024">
    <property type="entry name" value="CbiM"/>
</dbReference>
<dbReference type="InterPro" id="IPR002751">
    <property type="entry name" value="CbiM/NikMN"/>
</dbReference>
<dbReference type="NCBIfam" id="TIGR00123">
    <property type="entry name" value="cbiM"/>
    <property type="match status" value="1"/>
</dbReference>
<dbReference type="NCBIfam" id="NF006184">
    <property type="entry name" value="PRK08319.1"/>
    <property type="match status" value="1"/>
</dbReference>
<dbReference type="PANTHER" id="PTHR43627">
    <property type="match status" value="1"/>
</dbReference>
<dbReference type="PANTHER" id="PTHR43627:SF1">
    <property type="entry name" value="COBALT TRANSPORT PROTEIN CBIM"/>
    <property type="match status" value="1"/>
</dbReference>
<dbReference type="Pfam" id="PF01891">
    <property type="entry name" value="CbiM"/>
    <property type="match status" value="1"/>
</dbReference>
<protein>
    <recommendedName>
        <fullName evidence="1">Cobalt transport protein CbiM</fullName>
    </recommendedName>
    <alternativeName>
        <fullName evidence="1">Energy-coupling factor transporter probable substrate-capture protein CbiM</fullName>
        <shortName evidence="1">ECF transporter S component CbiM</shortName>
    </alternativeName>
</protein>
<name>CBIM_PROFC</name>
<sequence>MHIAEGVLPPVQCAIWFAAAAPFVVHGAVQVVKQIKHHPENRLLLATAGACTFLLSSIKLPSVTGSSSHPTGTGVGAVLFKPPVMAFMGLIVLIFQALLLAHGGITTLGANTFSMAIVGPWVGYGAYVLNKKLGGPLALGIFLAMFLSDLSTYCVTSFQLAFAYPDPSSGVLGAAEKFLGIFAISQIPLSVAEGILGILLFRFLFKVAGPQLQALGVRIGNKRTANAEVPEVAHV</sequence>
<keyword id="KW-1003">Cell membrane</keyword>
<keyword id="KW-0169">Cobalamin biosynthesis</keyword>
<keyword id="KW-0170">Cobalt</keyword>
<keyword id="KW-0171">Cobalt transport</keyword>
<keyword id="KW-0406">Ion transport</keyword>
<keyword id="KW-0472">Membrane</keyword>
<keyword id="KW-1185">Reference proteome</keyword>
<keyword id="KW-0812">Transmembrane</keyword>
<keyword id="KW-1133">Transmembrane helix</keyword>
<keyword id="KW-0813">Transport</keyword>
<gene>
    <name evidence="1" type="primary">cbiM</name>
    <name type="ordered locus">PFREUD_04590</name>
</gene>